<evidence type="ECO:0000250" key="1"/>
<evidence type="ECO:0000255" key="2"/>
<evidence type="ECO:0000305" key="3"/>
<reference key="1">
    <citation type="journal article" date="2010" name="Zoology">
        <title>Transcriptome analysis of the venom glands of the Chinese wolf spider Lycosa singoriensis.</title>
        <authorList>
            <person name="Zhang Y."/>
            <person name="Chen J."/>
            <person name="Tang X."/>
            <person name="Wang F."/>
            <person name="Jiang L."/>
            <person name="Xiong X."/>
            <person name="Wang M."/>
            <person name="Rong M."/>
            <person name="Liu Z."/>
            <person name="Liang S."/>
        </authorList>
    </citation>
    <scope>NUCLEOTIDE SEQUENCE [LARGE SCALE MRNA]</scope>
    <source>
        <tissue>Venom gland</tissue>
    </source>
</reference>
<name>TX149_LYCSI</name>
<protein>
    <recommendedName>
        <fullName>U1-lycotoxin-Ls1gg</fullName>
    </recommendedName>
    <alternativeName>
        <fullName>Toxin-like structure LSTX-A49</fullName>
    </alternativeName>
</protein>
<comment type="subcellular location">
    <subcellularLocation>
        <location evidence="1">Secreted</location>
    </subcellularLocation>
</comment>
<comment type="tissue specificity">
    <text>Expressed by the venom gland.</text>
</comment>
<comment type="similarity">
    <text evidence="3">Belongs to the neurotoxin 19 (CSTX) family. 03 subfamily.</text>
</comment>
<organism>
    <name type="scientific">Lycosa singoriensis</name>
    <name type="common">Wolf spider</name>
    <name type="synonym">Aranea singoriensis</name>
    <dbReference type="NCBI Taxonomy" id="434756"/>
    <lineage>
        <taxon>Eukaryota</taxon>
        <taxon>Metazoa</taxon>
        <taxon>Ecdysozoa</taxon>
        <taxon>Arthropoda</taxon>
        <taxon>Chelicerata</taxon>
        <taxon>Arachnida</taxon>
        <taxon>Araneae</taxon>
        <taxon>Araneomorphae</taxon>
        <taxon>Entelegynae</taxon>
        <taxon>Lycosoidea</taxon>
        <taxon>Lycosidae</taxon>
        <taxon>Lycosa</taxon>
    </lineage>
</organism>
<proteinExistence type="evidence at transcript level"/>
<feature type="signal peptide" evidence="2">
    <location>
        <begin position="1"/>
        <end position="20"/>
    </location>
</feature>
<feature type="propeptide" id="PRO_0000401593" evidence="1">
    <location>
        <begin position="21"/>
        <end position="44"/>
    </location>
</feature>
<feature type="chain" id="PRO_0000401594" description="U1-lycotoxin-Ls1gg">
    <location>
        <begin position="45"/>
        <end position="110"/>
    </location>
</feature>
<feature type="disulfide bond" evidence="1">
    <location>
        <begin position="54"/>
        <end position="71"/>
    </location>
</feature>
<feature type="disulfide bond" evidence="1">
    <location>
        <begin position="61"/>
        <end position="89"/>
    </location>
</feature>
<feature type="disulfide bond" evidence="1">
    <location>
        <begin position="73"/>
        <end position="87"/>
    </location>
</feature>
<keyword id="KW-1015">Disulfide bond</keyword>
<keyword id="KW-0964">Secreted</keyword>
<keyword id="KW-0732">Signal</keyword>
<keyword id="KW-0800">Toxin</keyword>
<dbReference type="EMBL" id="EU925972">
    <property type="protein sequence ID" value="ACI41304.1"/>
    <property type="molecule type" value="mRNA"/>
</dbReference>
<dbReference type="EMBL" id="FM863976">
    <property type="protein sequence ID" value="CAS03574.1"/>
    <property type="molecule type" value="mRNA"/>
</dbReference>
<dbReference type="SMR" id="B6DCN8"/>
<dbReference type="ArachnoServer" id="AS000921">
    <property type="toxin name" value="U1-lycotoxin-Ls1gg"/>
</dbReference>
<dbReference type="GO" id="GO:0005576">
    <property type="term" value="C:extracellular region"/>
    <property type="evidence" value="ECO:0007669"/>
    <property type="project" value="UniProtKB-SubCell"/>
</dbReference>
<dbReference type="GO" id="GO:0090729">
    <property type="term" value="F:toxin activity"/>
    <property type="evidence" value="ECO:0007669"/>
    <property type="project" value="UniProtKB-KW"/>
</dbReference>
<dbReference type="InterPro" id="IPR019553">
    <property type="entry name" value="Spider_toxin_CSTX_knottin"/>
</dbReference>
<dbReference type="Pfam" id="PF10530">
    <property type="entry name" value="Toxin_35"/>
    <property type="match status" value="1"/>
</dbReference>
<accession>B6DCN8</accession>
<sequence>MKFVLLFGVLLVTLFSYSSAEMLDDFDQADEDELLSLIEKEEARKDRIPKHHECTSNKHGCCRGHLFKYKCQCTTVVTQSGEETERCFCGTPPHHKAAELVVGFGKKIFG</sequence>